<organism>
    <name type="scientific">Coffea arabica</name>
    <name type="common">Arabian coffee</name>
    <dbReference type="NCBI Taxonomy" id="13443"/>
    <lineage>
        <taxon>Eukaryota</taxon>
        <taxon>Viridiplantae</taxon>
        <taxon>Streptophyta</taxon>
        <taxon>Embryophyta</taxon>
        <taxon>Tracheophyta</taxon>
        <taxon>Spermatophyta</taxon>
        <taxon>Magnoliopsida</taxon>
        <taxon>eudicotyledons</taxon>
        <taxon>Gunneridae</taxon>
        <taxon>Pentapetalae</taxon>
        <taxon>asterids</taxon>
        <taxon>lamiids</taxon>
        <taxon>Gentianales</taxon>
        <taxon>Rubiaceae</taxon>
        <taxon>Ixoroideae</taxon>
        <taxon>Gardenieae complex</taxon>
        <taxon>Bertiereae - Coffeeae clade</taxon>
        <taxon>Coffeeae</taxon>
        <taxon>Coffea</taxon>
    </lineage>
</organism>
<sequence>MSLRSEHIWIELIKGSRKISNFCWAFILFVGSVGFLLVGISSYLGRNLISFFPSQQIVFFPQGIVMSFYGIAGLFISSYLWCTISWNVGNGYDRFDRKEGIVCIFRWGFPGKNRRIFLRFLIKDIQSIRIEVKEGIFARRVLYMEIRGQGTIPLTRTDENLTPREIEQKAAELAYFLRVPIEVF</sequence>
<geneLocation type="chloroplast"/>
<name>YCF4_COFAR</name>
<dbReference type="EMBL" id="EF044213">
    <property type="protein sequence ID" value="ABJ89690.1"/>
    <property type="molecule type" value="Genomic_DNA"/>
</dbReference>
<dbReference type="RefSeq" id="YP_817493.1">
    <property type="nucleotide sequence ID" value="NC_008535.1"/>
</dbReference>
<dbReference type="GeneID" id="4421774"/>
<dbReference type="OrthoDB" id="1927442at2759"/>
<dbReference type="Proteomes" id="UP000515148">
    <property type="component" value="Chloroplast Pltd"/>
</dbReference>
<dbReference type="GO" id="GO:0009535">
    <property type="term" value="C:chloroplast thylakoid membrane"/>
    <property type="evidence" value="ECO:0007669"/>
    <property type="project" value="UniProtKB-SubCell"/>
</dbReference>
<dbReference type="GO" id="GO:0009522">
    <property type="term" value="C:photosystem I"/>
    <property type="evidence" value="ECO:0007669"/>
    <property type="project" value="InterPro"/>
</dbReference>
<dbReference type="GO" id="GO:0015979">
    <property type="term" value="P:photosynthesis"/>
    <property type="evidence" value="ECO:0007669"/>
    <property type="project" value="UniProtKB-UniRule"/>
</dbReference>
<dbReference type="HAMAP" id="MF_00437">
    <property type="entry name" value="Ycf4"/>
    <property type="match status" value="1"/>
</dbReference>
<dbReference type="InterPro" id="IPR003359">
    <property type="entry name" value="PSI_Ycf4_assembly"/>
</dbReference>
<dbReference type="NCBIfam" id="NF002712">
    <property type="entry name" value="PRK02542.1"/>
    <property type="match status" value="1"/>
</dbReference>
<dbReference type="PANTHER" id="PTHR33288">
    <property type="match status" value="1"/>
</dbReference>
<dbReference type="PANTHER" id="PTHR33288:SF4">
    <property type="entry name" value="PHOTOSYSTEM I ASSEMBLY PROTEIN YCF4"/>
    <property type="match status" value="1"/>
</dbReference>
<dbReference type="Pfam" id="PF02392">
    <property type="entry name" value="Ycf4"/>
    <property type="match status" value="1"/>
</dbReference>
<protein>
    <recommendedName>
        <fullName evidence="1">Photosystem I assembly protein Ycf4</fullName>
    </recommendedName>
</protein>
<keyword id="KW-0150">Chloroplast</keyword>
<keyword id="KW-0472">Membrane</keyword>
<keyword id="KW-0602">Photosynthesis</keyword>
<keyword id="KW-0934">Plastid</keyword>
<keyword id="KW-1185">Reference proteome</keyword>
<keyword id="KW-0793">Thylakoid</keyword>
<keyword id="KW-0812">Transmembrane</keyword>
<keyword id="KW-1133">Transmembrane helix</keyword>
<comment type="function">
    <text evidence="1">Seems to be required for the assembly of the photosystem I complex.</text>
</comment>
<comment type="subcellular location">
    <subcellularLocation>
        <location evidence="1">Plastid</location>
        <location evidence="1">Chloroplast thylakoid membrane</location>
        <topology evidence="1">Multi-pass membrane protein</topology>
    </subcellularLocation>
</comment>
<comment type="similarity">
    <text evidence="1">Belongs to the Ycf4 family.</text>
</comment>
<reference key="1">
    <citation type="journal article" date="2007" name="Plant Biotechnol. J.">
        <title>The complete nucleotide sequence of the coffee (Coffea arabica L.) chloroplast genome: organization and implications for biotechnology and phylogenetic relationships amongst angiosperms.</title>
        <authorList>
            <person name="Samson N."/>
            <person name="Bausher M.G."/>
            <person name="Lee S.-B."/>
            <person name="Jansen R.K."/>
            <person name="Daniell H."/>
        </authorList>
    </citation>
    <scope>NUCLEOTIDE SEQUENCE [LARGE SCALE GENOMIC DNA]</scope>
</reference>
<proteinExistence type="inferred from homology"/>
<evidence type="ECO:0000255" key="1">
    <source>
        <dbReference type="HAMAP-Rule" id="MF_00437"/>
    </source>
</evidence>
<gene>
    <name evidence="1" type="primary">ycf4</name>
</gene>
<accession>A0A346</accession>
<feature type="chain" id="PRO_0000275650" description="Photosystem I assembly protein Ycf4">
    <location>
        <begin position="1"/>
        <end position="184"/>
    </location>
</feature>
<feature type="transmembrane region" description="Helical" evidence="1">
    <location>
        <begin position="22"/>
        <end position="42"/>
    </location>
</feature>
<feature type="transmembrane region" description="Helical" evidence="1">
    <location>
        <begin position="57"/>
        <end position="77"/>
    </location>
</feature>